<organism>
    <name type="scientific">Homo sapiens</name>
    <name type="common">Human</name>
    <dbReference type="NCBI Taxonomy" id="9606"/>
    <lineage>
        <taxon>Eukaryota</taxon>
        <taxon>Metazoa</taxon>
        <taxon>Chordata</taxon>
        <taxon>Craniata</taxon>
        <taxon>Vertebrata</taxon>
        <taxon>Euteleostomi</taxon>
        <taxon>Mammalia</taxon>
        <taxon>Eutheria</taxon>
        <taxon>Euarchontoglires</taxon>
        <taxon>Primates</taxon>
        <taxon>Haplorrhini</taxon>
        <taxon>Catarrhini</taxon>
        <taxon>Hominidae</taxon>
        <taxon>Homo</taxon>
    </lineage>
</organism>
<name>ZN484_HUMAN</name>
<accession>Q5JVG2</accession>
<accession>B1AL89</accession>
<accession>B4DRI2</accession>
<protein>
    <recommendedName>
        <fullName>Zinc finger protein 484</fullName>
    </recommendedName>
</protein>
<proteinExistence type="evidence at protein level"/>
<comment type="function">
    <text>May be involved in transcriptional regulation.</text>
</comment>
<comment type="subcellular location">
    <subcellularLocation>
        <location evidence="4">Nucleus</location>
    </subcellularLocation>
</comment>
<comment type="alternative products">
    <event type="alternative splicing"/>
    <isoform>
        <id>Q5JVG2-1</id>
        <name>1</name>
        <sequence type="displayed"/>
    </isoform>
    <isoform>
        <id>Q5JVG2-2</id>
        <name>2</name>
        <sequence type="described" ref="VSP_043079"/>
    </isoform>
    <isoform>
        <id>Q5JVG2-3</id>
        <name>3</name>
        <sequence type="described" ref="VSP_044922"/>
    </isoform>
</comment>
<comment type="similarity">
    <text evidence="4">Belongs to the krueppel C2H2-type zinc-finger protein family.</text>
</comment>
<keyword id="KW-0002">3D-structure</keyword>
<keyword id="KW-0025">Alternative splicing</keyword>
<keyword id="KW-0238">DNA-binding</keyword>
<keyword id="KW-1017">Isopeptide bond</keyword>
<keyword id="KW-0479">Metal-binding</keyword>
<keyword id="KW-0539">Nucleus</keyword>
<keyword id="KW-1267">Proteomics identification</keyword>
<keyword id="KW-1185">Reference proteome</keyword>
<keyword id="KW-0677">Repeat</keyword>
<keyword id="KW-0804">Transcription</keyword>
<keyword id="KW-0805">Transcription regulation</keyword>
<keyword id="KW-0832">Ubl conjugation</keyword>
<keyword id="KW-0862">Zinc</keyword>
<keyword id="KW-0863">Zinc-finger</keyword>
<evidence type="ECO:0000255" key="1">
    <source>
        <dbReference type="PROSITE-ProRule" id="PRU00042"/>
    </source>
</evidence>
<evidence type="ECO:0000255" key="2">
    <source>
        <dbReference type="PROSITE-ProRule" id="PRU00119"/>
    </source>
</evidence>
<evidence type="ECO:0000303" key="3">
    <source>
    </source>
</evidence>
<evidence type="ECO:0000305" key="4"/>
<evidence type="ECO:0007744" key="5">
    <source>
    </source>
</evidence>
<evidence type="ECO:0007829" key="6">
    <source>
        <dbReference type="PDB" id="2EMF"/>
    </source>
</evidence>
<evidence type="ECO:0007829" key="7">
    <source>
        <dbReference type="PDB" id="2EMG"/>
    </source>
</evidence>
<evidence type="ECO:0007829" key="8">
    <source>
        <dbReference type="PDB" id="2EMH"/>
    </source>
</evidence>
<evidence type="ECO:0007829" key="9">
    <source>
        <dbReference type="PDB" id="2EMI"/>
    </source>
</evidence>
<evidence type="ECO:0007829" key="10">
    <source>
        <dbReference type="PDB" id="2EOV"/>
    </source>
</evidence>
<evidence type="ECO:0007829" key="11">
    <source>
        <dbReference type="PDB" id="2EP1"/>
    </source>
</evidence>
<evidence type="ECO:0007829" key="12">
    <source>
        <dbReference type="PDB" id="2EP2"/>
    </source>
</evidence>
<evidence type="ECO:0007829" key="13">
    <source>
        <dbReference type="PDB" id="2EP3"/>
    </source>
</evidence>
<evidence type="ECO:0007829" key="14">
    <source>
        <dbReference type="PDB" id="2EQW"/>
    </source>
</evidence>
<evidence type="ECO:0007829" key="15">
    <source>
        <dbReference type="PDB" id="2YTJ"/>
    </source>
</evidence>
<evidence type="ECO:0007829" key="16">
    <source>
        <dbReference type="PDB" id="2YTO"/>
    </source>
</evidence>
<evidence type="ECO:0007829" key="17">
    <source>
        <dbReference type="PDB" id="2YTP"/>
    </source>
</evidence>
<evidence type="ECO:0007829" key="18">
    <source>
        <dbReference type="PDB" id="2YTS"/>
    </source>
</evidence>
<reference key="1">
    <citation type="journal article" date="2004" name="Nat. Genet.">
        <title>Complete sequencing and characterization of 21,243 full-length human cDNAs.</title>
        <authorList>
            <person name="Ota T."/>
            <person name="Suzuki Y."/>
            <person name="Nishikawa T."/>
            <person name="Otsuki T."/>
            <person name="Sugiyama T."/>
            <person name="Irie R."/>
            <person name="Wakamatsu A."/>
            <person name="Hayashi K."/>
            <person name="Sato H."/>
            <person name="Nagai K."/>
            <person name="Kimura K."/>
            <person name="Makita H."/>
            <person name="Sekine M."/>
            <person name="Obayashi M."/>
            <person name="Nishi T."/>
            <person name="Shibahara T."/>
            <person name="Tanaka T."/>
            <person name="Ishii S."/>
            <person name="Yamamoto J."/>
            <person name="Saito K."/>
            <person name="Kawai Y."/>
            <person name="Isono Y."/>
            <person name="Nakamura Y."/>
            <person name="Nagahari K."/>
            <person name="Murakami K."/>
            <person name="Yasuda T."/>
            <person name="Iwayanagi T."/>
            <person name="Wagatsuma M."/>
            <person name="Shiratori A."/>
            <person name="Sudo H."/>
            <person name="Hosoiri T."/>
            <person name="Kaku Y."/>
            <person name="Kodaira H."/>
            <person name="Kondo H."/>
            <person name="Sugawara M."/>
            <person name="Takahashi M."/>
            <person name="Kanda K."/>
            <person name="Yokoi T."/>
            <person name="Furuya T."/>
            <person name="Kikkawa E."/>
            <person name="Omura Y."/>
            <person name="Abe K."/>
            <person name="Kamihara K."/>
            <person name="Katsuta N."/>
            <person name="Sato K."/>
            <person name="Tanikawa M."/>
            <person name="Yamazaki M."/>
            <person name="Ninomiya K."/>
            <person name="Ishibashi T."/>
            <person name="Yamashita H."/>
            <person name="Murakawa K."/>
            <person name="Fujimori K."/>
            <person name="Tanai H."/>
            <person name="Kimata M."/>
            <person name="Watanabe M."/>
            <person name="Hiraoka S."/>
            <person name="Chiba Y."/>
            <person name="Ishida S."/>
            <person name="Ono Y."/>
            <person name="Takiguchi S."/>
            <person name="Watanabe S."/>
            <person name="Yosida M."/>
            <person name="Hotuta T."/>
            <person name="Kusano J."/>
            <person name="Kanehori K."/>
            <person name="Takahashi-Fujii A."/>
            <person name="Hara H."/>
            <person name="Tanase T.-O."/>
            <person name="Nomura Y."/>
            <person name="Togiya S."/>
            <person name="Komai F."/>
            <person name="Hara R."/>
            <person name="Takeuchi K."/>
            <person name="Arita M."/>
            <person name="Imose N."/>
            <person name="Musashino K."/>
            <person name="Yuuki H."/>
            <person name="Oshima A."/>
            <person name="Sasaki N."/>
            <person name="Aotsuka S."/>
            <person name="Yoshikawa Y."/>
            <person name="Matsunawa H."/>
            <person name="Ichihara T."/>
            <person name="Shiohata N."/>
            <person name="Sano S."/>
            <person name="Moriya S."/>
            <person name="Momiyama H."/>
            <person name="Satoh N."/>
            <person name="Takami S."/>
            <person name="Terashima Y."/>
            <person name="Suzuki O."/>
            <person name="Nakagawa S."/>
            <person name="Senoh A."/>
            <person name="Mizoguchi H."/>
            <person name="Goto Y."/>
            <person name="Shimizu F."/>
            <person name="Wakebe H."/>
            <person name="Hishigaki H."/>
            <person name="Watanabe T."/>
            <person name="Sugiyama A."/>
            <person name="Takemoto M."/>
            <person name="Kawakami B."/>
            <person name="Yamazaki M."/>
            <person name="Watanabe K."/>
            <person name="Kumagai A."/>
            <person name="Itakura S."/>
            <person name="Fukuzumi Y."/>
            <person name="Fujimori Y."/>
            <person name="Komiyama M."/>
            <person name="Tashiro H."/>
            <person name="Tanigami A."/>
            <person name="Fujiwara T."/>
            <person name="Ono T."/>
            <person name="Yamada K."/>
            <person name="Fujii Y."/>
            <person name="Ozaki K."/>
            <person name="Hirao M."/>
            <person name="Ohmori Y."/>
            <person name="Kawabata A."/>
            <person name="Hikiji T."/>
            <person name="Kobatake N."/>
            <person name="Inagaki H."/>
            <person name="Ikema Y."/>
            <person name="Okamoto S."/>
            <person name="Okitani R."/>
            <person name="Kawakami T."/>
            <person name="Noguchi S."/>
            <person name="Itoh T."/>
            <person name="Shigeta K."/>
            <person name="Senba T."/>
            <person name="Matsumura K."/>
            <person name="Nakajima Y."/>
            <person name="Mizuno T."/>
            <person name="Morinaga M."/>
            <person name="Sasaki M."/>
            <person name="Togashi T."/>
            <person name="Oyama M."/>
            <person name="Hata H."/>
            <person name="Watanabe M."/>
            <person name="Komatsu T."/>
            <person name="Mizushima-Sugano J."/>
            <person name="Satoh T."/>
            <person name="Shirai Y."/>
            <person name="Takahashi Y."/>
            <person name="Nakagawa K."/>
            <person name="Okumura K."/>
            <person name="Nagase T."/>
            <person name="Nomura N."/>
            <person name="Kikuchi H."/>
            <person name="Masuho Y."/>
            <person name="Yamashita R."/>
            <person name="Nakai K."/>
            <person name="Yada T."/>
            <person name="Nakamura Y."/>
            <person name="Ohara O."/>
            <person name="Isogai T."/>
            <person name="Sugano S."/>
        </authorList>
    </citation>
    <scope>NUCLEOTIDE SEQUENCE [LARGE SCALE MRNA] (ISOFORMS 2 AND 3)</scope>
    <source>
        <tissue>Tongue</tissue>
    </source>
</reference>
<reference key="2">
    <citation type="journal article" date="2004" name="Nature">
        <title>DNA sequence and analysis of human chromosome 9.</title>
        <authorList>
            <person name="Humphray S.J."/>
            <person name="Oliver K."/>
            <person name="Hunt A.R."/>
            <person name="Plumb R.W."/>
            <person name="Loveland J.E."/>
            <person name="Howe K.L."/>
            <person name="Andrews T.D."/>
            <person name="Searle S."/>
            <person name="Hunt S.E."/>
            <person name="Scott C.E."/>
            <person name="Jones M.C."/>
            <person name="Ainscough R."/>
            <person name="Almeida J.P."/>
            <person name="Ambrose K.D."/>
            <person name="Ashwell R.I.S."/>
            <person name="Babbage A.K."/>
            <person name="Babbage S."/>
            <person name="Bagguley C.L."/>
            <person name="Bailey J."/>
            <person name="Banerjee R."/>
            <person name="Barker D.J."/>
            <person name="Barlow K.F."/>
            <person name="Bates K."/>
            <person name="Beasley H."/>
            <person name="Beasley O."/>
            <person name="Bird C.P."/>
            <person name="Bray-Allen S."/>
            <person name="Brown A.J."/>
            <person name="Brown J.Y."/>
            <person name="Burford D."/>
            <person name="Burrill W."/>
            <person name="Burton J."/>
            <person name="Carder C."/>
            <person name="Carter N.P."/>
            <person name="Chapman J.C."/>
            <person name="Chen Y."/>
            <person name="Clarke G."/>
            <person name="Clark S.Y."/>
            <person name="Clee C.M."/>
            <person name="Clegg S."/>
            <person name="Collier R.E."/>
            <person name="Corby N."/>
            <person name="Crosier M."/>
            <person name="Cummings A.T."/>
            <person name="Davies J."/>
            <person name="Dhami P."/>
            <person name="Dunn M."/>
            <person name="Dutta I."/>
            <person name="Dyer L.W."/>
            <person name="Earthrowl M.E."/>
            <person name="Faulkner L."/>
            <person name="Fleming C.J."/>
            <person name="Frankish A."/>
            <person name="Frankland J.A."/>
            <person name="French L."/>
            <person name="Fricker D.G."/>
            <person name="Garner P."/>
            <person name="Garnett J."/>
            <person name="Ghori J."/>
            <person name="Gilbert J.G.R."/>
            <person name="Glison C."/>
            <person name="Grafham D.V."/>
            <person name="Gribble S."/>
            <person name="Griffiths C."/>
            <person name="Griffiths-Jones S."/>
            <person name="Grocock R."/>
            <person name="Guy J."/>
            <person name="Hall R.E."/>
            <person name="Hammond S."/>
            <person name="Harley J.L."/>
            <person name="Harrison E.S.I."/>
            <person name="Hart E.A."/>
            <person name="Heath P.D."/>
            <person name="Henderson C.D."/>
            <person name="Hopkins B.L."/>
            <person name="Howard P.J."/>
            <person name="Howden P.J."/>
            <person name="Huckle E."/>
            <person name="Johnson C."/>
            <person name="Johnson D."/>
            <person name="Joy A.A."/>
            <person name="Kay M."/>
            <person name="Keenan S."/>
            <person name="Kershaw J.K."/>
            <person name="Kimberley A.M."/>
            <person name="King A."/>
            <person name="Knights A."/>
            <person name="Laird G.K."/>
            <person name="Langford C."/>
            <person name="Lawlor S."/>
            <person name="Leongamornlert D.A."/>
            <person name="Leversha M."/>
            <person name="Lloyd C."/>
            <person name="Lloyd D.M."/>
            <person name="Lovell J."/>
            <person name="Martin S."/>
            <person name="Mashreghi-Mohammadi M."/>
            <person name="Matthews L."/>
            <person name="McLaren S."/>
            <person name="McLay K.E."/>
            <person name="McMurray A."/>
            <person name="Milne S."/>
            <person name="Nickerson T."/>
            <person name="Nisbett J."/>
            <person name="Nordsiek G."/>
            <person name="Pearce A.V."/>
            <person name="Peck A.I."/>
            <person name="Porter K.M."/>
            <person name="Pandian R."/>
            <person name="Pelan S."/>
            <person name="Phillimore B."/>
            <person name="Povey S."/>
            <person name="Ramsey Y."/>
            <person name="Rand V."/>
            <person name="Scharfe M."/>
            <person name="Sehra H.K."/>
            <person name="Shownkeen R."/>
            <person name="Sims S.K."/>
            <person name="Skuce C.D."/>
            <person name="Smith M."/>
            <person name="Steward C.A."/>
            <person name="Swarbreck D."/>
            <person name="Sycamore N."/>
            <person name="Tester J."/>
            <person name="Thorpe A."/>
            <person name="Tracey A."/>
            <person name="Tromans A."/>
            <person name="Thomas D.W."/>
            <person name="Wall M."/>
            <person name="Wallis J.M."/>
            <person name="West A.P."/>
            <person name="Whitehead S.L."/>
            <person name="Willey D.L."/>
            <person name="Williams S.A."/>
            <person name="Wilming L."/>
            <person name="Wray P.W."/>
            <person name="Young L."/>
            <person name="Ashurst J.L."/>
            <person name="Coulson A."/>
            <person name="Blocker H."/>
            <person name="Durbin R.M."/>
            <person name="Sulston J.E."/>
            <person name="Hubbard T."/>
            <person name="Jackson M.J."/>
            <person name="Bentley D.R."/>
            <person name="Beck S."/>
            <person name="Rogers J."/>
            <person name="Dunham I."/>
        </authorList>
    </citation>
    <scope>NUCLEOTIDE SEQUENCE [LARGE SCALE GENOMIC DNA]</scope>
</reference>
<reference key="3">
    <citation type="submission" date="2005-07" db="EMBL/GenBank/DDBJ databases">
        <authorList>
            <person name="Mural R.J."/>
            <person name="Istrail S."/>
            <person name="Sutton G."/>
            <person name="Florea L."/>
            <person name="Halpern A.L."/>
            <person name="Mobarry C.M."/>
            <person name="Lippert R."/>
            <person name="Walenz B."/>
            <person name="Shatkay H."/>
            <person name="Dew I."/>
            <person name="Miller J.R."/>
            <person name="Flanigan M.J."/>
            <person name="Edwards N.J."/>
            <person name="Bolanos R."/>
            <person name="Fasulo D."/>
            <person name="Halldorsson B.V."/>
            <person name="Hannenhalli S."/>
            <person name="Turner R."/>
            <person name="Yooseph S."/>
            <person name="Lu F."/>
            <person name="Nusskern D.R."/>
            <person name="Shue B.C."/>
            <person name="Zheng X.H."/>
            <person name="Zhong F."/>
            <person name="Delcher A.L."/>
            <person name="Huson D.H."/>
            <person name="Kravitz S.A."/>
            <person name="Mouchard L."/>
            <person name="Reinert K."/>
            <person name="Remington K.A."/>
            <person name="Clark A.G."/>
            <person name="Waterman M.S."/>
            <person name="Eichler E.E."/>
            <person name="Adams M.D."/>
            <person name="Hunkapiller M.W."/>
            <person name="Myers E.W."/>
            <person name="Venter J.C."/>
        </authorList>
    </citation>
    <scope>NUCLEOTIDE SEQUENCE [LARGE SCALE GENOMIC DNA]</scope>
</reference>
<reference key="4">
    <citation type="journal article" date="2004" name="Genome Res.">
        <title>The status, quality, and expansion of the NIH full-length cDNA project: the Mammalian Gene Collection (MGC).</title>
        <authorList>
            <consortium name="The MGC Project Team"/>
        </authorList>
    </citation>
    <scope>NUCLEOTIDE SEQUENCE [LARGE SCALE MRNA] (ISOFORM 1)</scope>
</reference>
<reference key="5">
    <citation type="journal article" date="2017" name="Nat. Struct. Mol. Biol.">
        <title>Site-specific mapping of the human SUMO proteome reveals co-modification with phosphorylation.</title>
        <authorList>
            <person name="Hendriks I.A."/>
            <person name="Lyon D."/>
            <person name="Young C."/>
            <person name="Jensen L.J."/>
            <person name="Vertegaal A.C."/>
            <person name="Nielsen M.L."/>
        </authorList>
    </citation>
    <scope>SUMOYLATION [LARGE SCALE ANALYSIS] AT LYS-156 AND LYS-816</scope>
    <scope>IDENTIFICATION BY MASS SPECTROMETRY [LARGE SCALE ANALYSIS]</scope>
</reference>
<reference key="6">
    <citation type="submission" date="2007-10" db="PDB data bank">
        <title>Solution structure of the C2H2 type zinc finger region of human zinc finger protein 484.</title>
        <authorList>
            <consortium name="RIKEN structural genomics initiative (RSGI)"/>
        </authorList>
    </citation>
    <scope>STRUCTURE BY NMR OF 379-803</scope>
</reference>
<gene>
    <name type="primary">ZNF484</name>
</gene>
<feature type="chain" id="PRO_0000233986" description="Zinc finger protein 484">
    <location>
        <begin position="1"/>
        <end position="852"/>
    </location>
</feature>
<feature type="domain" description="KRAB" evidence="2">
    <location>
        <begin position="8"/>
        <end position="78"/>
    </location>
</feature>
<feature type="zinc finger region" description="C2H2-type 1; degenerate" evidence="1">
    <location>
        <begin position="223"/>
        <end position="245"/>
    </location>
</feature>
<feature type="zinc finger region" description="C2H2-type 2; degenerate" evidence="1">
    <location>
        <begin position="279"/>
        <end position="301"/>
    </location>
</feature>
<feature type="zinc finger region" description="C2H2-type 3; degenerate" evidence="1">
    <location>
        <begin position="328"/>
        <end position="350"/>
    </location>
</feature>
<feature type="zinc finger region" description="C2H2-type 4; degenerate" evidence="1">
    <location>
        <begin position="356"/>
        <end position="378"/>
    </location>
</feature>
<feature type="zinc finger region" description="C2H2-type 5" evidence="1">
    <location>
        <begin position="384"/>
        <end position="406"/>
    </location>
</feature>
<feature type="zinc finger region" description="C2H2-type 6" evidence="1">
    <location>
        <begin position="412"/>
        <end position="434"/>
    </location>
</feature>
<feature type="zinc finger region" description="C2H2-type 7" evidence="1">
    <location>
        <begin position="440"/>
        <end position="462"/>
    </location>
</feature>
<feature type="zinc finger region" description="C2H2-type 8" evidence="1">
    <location>
        <begin position="468"/>
        <end position="490"/>
    </location>
</feature>
<feature type="zinc finger region" description="C2H2-type 9" evidence="1">
    <location>
        <begin position="496"/>
        <end position="518"/>
    </location>
</feature>
<feature type="zinc finger region" description="C2H2-type 10" evidence="1">
    <location>
        <begin position="524"/>
        <end position="546"/>
    </location>
</feature>
<feature type="zinc finger region" description="C2H2-type 11" evidence="1">
    <location>
        <begin position="552"/>
        <end position="574"/>
    </location>
</feature>
<feature type="zinc finger region" description="C2H2-type 12" evidence="1">
    <location>
        <begin position="580"/>
        <end position="602"/>
    </location>
</feature>
<feature type="zinc finger region" description="C2H2-type 13" evidence="1">
    <location>
        <begin position="608"/>
        <end position="630"/>
    </location>
</feature>
<feature type="zinc finger region" description="C2H2-type 14" evidence="1">
    <location>
        <begin position="636"/>
        <end position="658"/>
    </location>
</feature>
<feature type="zinc finger region" description="C2H2-type 15" evidence="1">
    <location>
        <begin position="664"/>
        <end position="686"/>
    </location>
</feature>
<feature type="zinc finger region" description="C2H2-type 16" evidence="1">
    <location>
        <begin position="692"/>
        <end position="714"/>
    </location>
</feature>
<feature type="zinc finger region" description="C2H2-type 17" evidence="1">
    <location>
        <begin position="720"/>
        <end position="742"/>
    </location>
</feature>
<feature type="zinc finger region" description="C2H2-type 18" evidence="1">
    <location>
        <begin position="748"/>
        <end position="770"/>
    </location>
</feature>
<feature type="zinc finger region" description="C2H2-type 19" evidence="1">
    <location>
        <begin position="776"/>
        <end position="798"/>
    </location>
</feature>
<feature type="cross-link" description="Glycyl lysine isopeptide (Lys-Gly) (interchain with G-Cter in SUMO2)" evidence="5">
    <location>
        <position position="156"/>
    </location>
</feature>
<feature type="cross-link" description="Glycyl lysine isopeptide (Lys-Gly) (interchain with G-Cter in SUMO2)" evidence="5">
    <location>
        <position position="816"/>
    </location>
</feature>
<feature type="splice variant" id="VSP_043079" description="In isoform 2." evidence="3">
    <location>
        <begin position="1"/>
        <end position="36"/>
    </location>
</feature>
<feature type="splice variant" id="VSP_044922" description="In isoform 3." evidence="3">
    <original>MTKSL</original>
    <variation>MSVLSLP</variation>
    <location>
        <begin position="1"/>
        <end position="5"/>
    </location>
</feature>
<feature type="sequence variant" id="VAR_033570" description="In dbSNP:rs3739602.">
    <original>G</original>
    <variation>D</variation>
    <location>
        <position position="502"/>
    </location>
</feature>
<feature type="strand" evidence="6">
    <location>
        <begin position="379"/>
        <end position="381"/>
    </location>
</feature>
<feature type="strand" evidence="6">
    <location>
        <begin position="387"/>
        <end position="389"/>
    </location>
</feature>
<feature type="strand" evidence="6">
    <location>
        <begin position="392"/>
        <end position="394"/>
    </location>
</feature>
<feature type="helix" evidence="6">
    <location>
        <begin position="396"/>
        <end position="402"/>
    </location>
</feature>
<feature type="helix" evidence="6">
    <location>
        <begin position="403"/>
        <end position="405"/>
    </location>
</feature>
<feature type="strand" evidence="14">
    <location>
        <begin position="411"/>
        <end position="413"/>
    </location>
</feature>
<feature type="strand" evidence="14">
    <location>
        <begin position="415"/>
        <end position="417"/>
    </location>
</feature>
<feature type="strand" evidence="14">
    <location>
        <begin position="420"/>
        <end position="425"/>
    </location>
</feature>
<feature type="helix" evidence="14">
    <location>
        <begin position="426"/>
        <end position="434"/>
    </location>
</feature>
<feature type="strand" evidence="11">
    <location>
        <begin position="443"/>
        <end position="445"/>
    </location>
</feature>
<feature type="helix" evidence="11">
    <location>
        <begin position="452"/>
        <end position="459"/>
    </location>
</feature>
<feature type="helix" evidence="11">
    <location>
        <begin position="460"/>
        <end position="462"/>
    </location>
</feature>
<feature type="strand" evidence="11">
    <location>
        <begin position="463"/>
        <end position="465"/>
    </location>
</feature>
<feature type="turn" evidence="7">
    <location>
        <begin position="471"/>
        <end position="473"/>
    </location>
</feature>
<feature type="helix" evidence="7">
    <location>
        <begin position="480"/>
        <end position="487"/>
    </location>
</feature>
<feature type="turn" evidence="7">
    <location>
        <begin position="488"/>
        <end position="490"/>
    </location>
</feature>
<feature type="strand" evidence="8">
    <location>
        <begin position="495"/>
        <end position="497"/>
    </location>
</feature>
<feature type="turn" evidence="8">
    <location>
        <begin position="499"/>
        <end position="501"/>
    </location>
</feature>
<feature type="strand" evidence="8">
    <location>
        <begin position="504"/>
        <end position="507"/>
    </location>
</feature>
<feature type="helix" evidence="8">
    <location>
        <begin position="508"/>
        <end position="519"/>
    </location>
</feature>
<feature type="strand" evidence="10">
    <location>
        <begin position="527"/>
        <end position="529"/>
    </location>
</feature>
<feature type="helix" evidence="10">
    <location>
        <begin position="536"/>
        <end position="545"/>
    </location>
</feature>
<feature type="strand" evidence="9">
    <location>
        <begin position="555"/>
        <end position="557"/>
    </location>
</feature>
<feature type="strand" evidence="9">
    <location>
        <begin position="560"/>
        <end position="563"/>
    </location>
</feature>
<feature type="helix" evidence="9">
    <location>
        <begin position="564"/>
        <end position="571"/>
    </location>
</feature>
<feature type="helix" evidence="9">
    <location>
        <begin position="572"/>
        <end position="574"/>
    </location>
</feature>
<feature type="strand" evidence="12">
    <location>
        <begin position="607"/>
        <end position="609"/>
    </location>
</feature>
<feature type="strand" evidence="12">
    <location>
        <begin position="611"/>
        <end position="613"/>
    </location>
</feature>
<feature type="strand" evidence="12">
    <location>
        <begin position="616"/>
        <end position="619"/>
    </location>
</feature>
<feature type="helix" evidence="12">
    <location>
        <begin position="620"/>
        <end position="628"/>
    </location>
</feature>
<feature type="strand" evidence="13">
    <location>
        <begin position="635"/>
        <end position="637"/>
    </location>
</feature>
<feature type="strand" evidence="13">
    <location>
        <begin position="639"/>
        <end position="641"/>
    </location>
</feature>
<feature type="strand" evidence="13">
    <location>
        <begin position="644"/>
        <end position="647"/>
    </location>
</feature>
<feature type="helix" evidence="13">
    <location>
        <begin position="648"/>
        <end position="655"/>
    </location>
</feature>
<feature type="turn" evidence="13">
    <location>
        <begin position="656"/>
        <end position="660"/>
    </location>
</feature>
<feature type="strand" evidence="16">
    <location>
        <begin position="667"/>
        <end position="669"/>
    </location>
</feature>
<feature type="strand" evidence="16">
    <location>
        <begin position="672"/>
        <end position="675"/>
    </location>
</feature>
<feature type="helix" evidence="16">
    <location>
        <begin position="676"/>
        <end position="686"/>
    </location>
</feature>
<feature type="strand" evidence="17">
    <location>
        <begin position="695"/>
        <end position="697"/>
    </location>
</feature>
<feature type="strand" evidence="17">
    <location>
        <begin position="700"/>
        <end position="703"/>
    </location>
</feature>
<feature type="helix" evidence="17">
    <location>
        <begin position="704"/>
        <end position="711"/>
    </location>
</feature>
<feature type="turn" evidence="17">
    <location>
        <begin position="712"/>
        <end position="714"/>
    </location>
</feature>
<feature type="strand" evidence="18">
    <location>
        <begin position="719"/>
        <end position="721"/>
    </location>
</feature>
<feature type="strand" evidence="18">
    <location>
        <begin position="723"/>
        <end position="725"/>
    </location>
</feature>
<feature type="strand" evidence="18">
    <location>
        <begin position="728"/>
        <end position="731"/>
    </location>
</feature>
<feature type="helix" evidence="18">
    <location>
        <begin position="732"/>
        <end position="738"/>
    </location>
</feature>
<feature type="helix" evidence="18">
    <location>
        <begin position="739"/>
        <end position="741"/>
    </location>
</feature>
<feature type="strand" evidence="15">
    <location>
        <begin position="775"/>
        <end position="777"/>
    </location>
</feature>
<feature type="strand" evidence="15">
    <location>
        <begin position="779"/>
        <end position="781"/>
    </location>
</feature>
<feature type="strand" evidence="15">
    <location>
        <begin position="784"/>
        <end position="787"/>
    </location>
</feature>
<feature type="helix" evidence="15">
    <location>
        <begin position="788"/>
        <end position="797"/>
    </location>
</feature>
<dbReference type="EMBL" id="AK091203">
    <property type="protein sequence ID" value="BAG52305.1"/>
    <property type="molecule type" value="mRNA"/>
</dbReference>
<dbReference type="EMBL" id="AK299274">
    <property type="protein sequence ID" value="BAG61294.1"/>
    <property type="molecule type" value="mRNA"/>
</dbReference>
<dbReference type="EMBL" id="AL136981">
    <property type="status" value="NOT_ANNOTATED_CDS"/>
    <property type="molecule type" value="Genomic_DNA"/>
</dbReference>
<dbReference type="EMBL" id="CH471089">
    <property type="protein sequence ID" value="EAW62837.1"/>
    <property type="molecule type" value="Genomic_DNA"/>
</dbReference>
<dbReference type="EMBL" id="BC112394">
    <property type="protein sequence ID" value="AAI12395.1"/>
    <property type="molecule type" value="mRNA"/>
</dbReference>
<dbReference type="EMBL" id="BC112396">
    <property type="protein sequence ID" value="AAI12397.1"/>
    <property type="molecule type" value="mRNA"/>
</dbReference>
<dbReference type="CCDS" id="CCDS35066.1">
    <molecule id="Q5JVG2-1"/>
</dbReference>
<dbReference type="CCDS" id="CCDS35067.1">
    <molecule id="Q5JVG2-2"/>
</dbReference>
<dbReference type="CCDS" id="CCDS59136.1">
    <molecule id="Q5JVG2-3"/>
</dbReference>
<dbReference type="RefSeq" id="NP_001007102.1">
    <molecule id="Q5JVG2-2"/>
    <property type="nucleotide sequence ID" value="NM_001007101.4"/>
</dbReference>
<dbReference type="RefSeq" id="NP_001248387.1">
    <molecule id="Q5JVG2-3"/>
    <property type="nucleotide sequence ID" value="NM_001261458.3"/>
</dbReference>
<dbReference type="RefSeq" id="NP_001248388.1">
    <molecule id="Q5JVG2-2"/>
    <property type="nucleotide sequence ID" value="NM_001261459.3"/>
</dbReference>
<dbReference type="RefSeq" id="NP_001248389.1">
    <molecule id="Q5JVG2-2"/>
    <property type="nucleotide sequence ID" value="NM_001261460.3"/>
</dbReference>
<dbReference type="RefSeq" id="NP_001341465.1">
    <molecule id="Q5JVG2-2"/>
    <property type="nucleotide sequence ID" value="NM_001354536.2"/>
</dbReference>
<dbReference type="RefSeq" id="NP_113674.1">
    <molecule id="Q5JVG2-1"/>
    <property type="nucleotide sequence ID" value="NM_031486.4"/>
</dbReference>
<dbReference type="RefSeq" id="XP_016870670.1">
    <property type="nucleotide sequence ID" value="XM_017015181.1"/>
</dbReference>
<dbReference type="PDB" id="2EMF">
    <property type="method" value="NMR"/>
    <property type="chains" value="A=379-411"/>
</dbReference>
<dbReference type="PDB" id="2EMG">
    <property type="method" value="NMR"/>
    <property type="chains" value="A=463-495"/>
</dbReference>
<dbReference type="PDB" id="2EMH">
    <property type="method" value="NMR"/>
    <property type="chains" value="A=491-523"/>
</dbReference>
<dbReference type="PDB" id="2EMI">
    <property type="method" value="NMR"/>
    <property type="chains" value="A=547-579"/>
</dbReference>
<dbReference type="PDB" id="2EOV">
    <property type="method" value="NMR"/>
    <property type="chains" value="A=519-551"/>
</dbReference>
<dbReference type="PDB" id="2EP1">
    <property type="method" value="NMR"/>
    <property type="chains" value="A=435-467"/>
</dbReference>
<dbReference type="PDB" id="2EP2">
    <property type="method" value="NMR"/>
    <property type="chains" value="A=603-635"/>
</dbReference>
<dbReference type="PDB" id="2EP3">
    <property type="method" value="NMR"/>
    <property type="chains" value="A=631-663"/>
</dbReference>
<dbReference type="PDB" id="2EQW">
    <property type="method" value="NMR"/>
    <property type="chains" value="A=409-437"/>
</dbReference>
<dbReference type="PDB" id="2YTJ">
    <property type="method" value="NMR"/>
    <property type="chains" value="A=771-803"/>
</dbReference>
<dbReference type="PDB" id="2YTO">
    <property type="method" value="NMR"/>
    <property type="chains" value="A=659-691"/>
</dbReference>
<dbReference type="PDB" id="2YTP">
    <property type="method" value="NMR"/>
    <property type="chains" value="A=687-719"/>
</dbReference>
<dbReference type="PDB" id="2YTS">
    <property type="method" value="NMR"/>
    <property type="chains" value="A=715-747"/>
</dbReference>
<dbReference type="PDBsum" id="2EMF"/>
<dbReference type="PDBsum" id="2EMG"/>
<dbReference type="PDBsum" id="2EMH"/>
<dbReference type="PDBsum" id="2EMI"/>
<dbReference type="PDBsum" id="2EOV"/>
<dbReference type="PDBsum" id="2EP1"/>
<dbReference type="PDBsum" id="2EP2"/>
<dbReference type="PDBsum" id="2EP3"/>
<dbReference type="PDBsum" id="2EQW"/>
<dbReference type="PDBsum" id="2YTJ"/>
<dbReference type="PDBsum" id="2YTO"/>
<dbReference type="PDBsum" id="2YTP"/>
<dbReference type="PDBsum" id="2YTS"/>
<dbReference type="SMR" id="Q5JVG2"/>
<dbReference type="BioGRID" id="123752">
    <property type="interactions" value="14"/>
</dbReference>
<dbReference type="FunCoup" id="Q5JVG2">
    <property type="interactions" value="13"/>
</dbReference>
<dbReference type="IntAct" id="Q5JVG2">
    <property type="interactions" value="16"/>
</dbReference>
<dbReference type="STRING" id="9606.ENSP00000378881"/>
<dbReference type="GlyGen" id="Q5JVG2">
    <property type="glycosylation" value="1 site, 1 O-linked glycan (1 site)"/>
</dbReference>
<dbReference type="iPTMnet" id="Q5JVG2"/>
<dbReference type="PhosphoSitePlus" id="Q5JVG2"/>
<dbReference type="BioMuta" id="ZNF484"/>
<dbReference type="DMDM" id="74762200"/>
<dbReference type="jPOST" id="Q5JVG2"/>
<dbReference type="MassIVE" id="Q5JVG2"/>
<dbReference type="PaxDb" id="9606-ENSP00000378881"/>
<dbReference type="PeptideAtlas" id="Q5JVG2"/>
<dbReference type="ProteomicsDB" id="4953"/>
<dbReference type="ProteomicsDB" id="63331">
    <molecule id="Q5JVG2-1"/>
</dbReference>
<dbReference type="ProteomicsDB" id="63332">
    <molecule id="Q5JVG2-2"/>
</dbReference>
<dbReference type="Antibodypedia" id="28320">
    <property type="antibodies" value="93 antibodies from 15 providers"/>
</dbReference>
<dbReference type="DNASU" id="83744"/>
<dbReference type="Ensembl" id="ENST00000332591.6">
    <molecule id="Q5JVG2-2"/>
    <property type="protein sequence ID" value="ENSP00000364646.3"/>
    <property type="gene ID" value="ENSG00000127081.15"/>
</dbReference>
<dbReference type="Ensembl" id="ENST00000375495.8">
    <molecule id="Q5JVG2-1"/>
    <property type="protein sequence ID" value="ENSP00000364645.3"/>
    <property type="gene ID" value="ENSG00000127081.15"/>
</dbReference>
<dbReference type="Ensembl" id="ENST00000395505.6">
    <molecule id="Q5JVG2-3"/>
    <property type="protein sequence ID" value="ENSP00000378881.3"/>
    <property type="gene ID" value="ENSG00000127081.15"/>
</dbReference>
<dbReference type="Ensembl" id="ENST00000395506.7">
    <molecule id="Q5JVG2-2"/>
    <property type="protein sequence ID" value="ENSP00000378882.4"/>
    <property type="gene ID" value="ENSG00000127081.15"/>
</dbReference>
<dbReference type="Ensembl" id="ENST00000718324.1">
    <molecule id="Q5JVG2-1"/>
    <property type="protein sequence ID" value="ENSP00000520759.1"/>
    <property type="gene ID" value="ENSG00000127081.15"/>
</dbReference>
<dbReference type="GeneID" id="83744"/>
<dbReference type="KEGG" id="hsa:83744"/>
<dbReference type="MANE-Select" id="ENST00000375495.8">
    <property type="protein sequence ID" value="ENSP00000364645.3"/>
    <property type="RefSeq nucleotide sequence ID" value="NM_031486.4"/>
    <property type="RefSeq protein sequence ID" value="NP_113674.1"/>
</dbReference>
<dbReference type="UCSC" id="uc004asu.3">
    <molecule id="Q5JVG2-1"/>
    <property type="organism name" value="human"/>
</dbReference>
<dbReference type="AGR" id="HGNC:23385"/>
<dbReference type="CTD" id="83744"/>
<dbReference type="DisGeNET" id="83744"/>
<dbReference type="GeneCards" id="ZNF484"/>
<dbReference type="HGNC" id="HGNC:23385">
    <property type="gene designation" value="ZNF484"/>
</dbReference>
<dbReference type="HPA" id="ENSG00000127081">
    <property type="expression patterns" value="Low tissue specificity"/>
</dbReference>
<dbReference type="neXtProt" id="NX_Q5JVG2"/>
<dbReference type="OpenTargets" id="ENSG00000127081"/>
<dbReference type="PharmGKB" id="PA134992184"/>
<dbReference type="VEuPathDB" id="HostDB:ENSG00000127081"/>
<dbReference type="eggNOG" id="KOG1721">
    <property type="taxonomic scope" value="Eukaryota"/>
</dbReference>
<dbReference type="GeneTree" id="ENSGT00940000163284"/>
<dbReference type="HOGENOM" id="CLU_002678_35_1_1"/>
<dbReference type="InParanoid" id="Q5JVG2"/>
<dbReference type="OMA" id="ACEYNQC"/>
<dbReference type="OrthoDB" id="9512632at2759"/>
<dbReference type="PAN-GO" id="Q5JVG2">
    <property type="GO annotations" value="4 GO annotations based on evolutionary models"/>
</dbReference>
<dbReference type="PhylomeDB" id="Q5JVG2"/>
<dbReference type="TreeFam" id="TF350810"/>
<dbReference type="PathwayCommons" id="Q5JVG2"/>
<dbReference type="Reactome" id="R-HSA-212436">
    <property type="pathway name" value="Generic Transcription Pathway"/>
</dbReference>
<dbReference type="SignaLink" id="Q5JVG2"/>
<dbReference type="BioGRID-ORCS" id="83744">
    <property type="hits" value="21 hits in 1166 CRISPR screens"/>
</dbReference>
<dbReference type="ChiTaRS" id="ZNF484">
    <property type="organism name" value="human"/>
</dbReference>
<dbReference type="EvolutionaryTrace" id="Q5JVG2"/>
<dbReference type="GenomeRNAi" id="83744"/>
<dbReference type="Pharos" id="Q5JVG2">
    <property type="development level" value="Tbio"/>
</dbReference>
<dbReference type="PRO" id="PR:Q5JVG2"/>
<dbReference type="Proteomes" id="UP000005640">
    <property type="component" value="Chromosome 9"/>
</dbReference>
<dbReference type="RNAct" id="Q5JVG2">
    <property type="molecule type" value="protein"/>
</dbReference>
<dbReference type="Bgee" id="ENSG00000127081">
    <property type="expression patterns" value="Expressed in corpus callosum and 107 other cell types or tissues"/>
</dbReference>
<dbReference type="GO" id="GO:0005634">
    <property type="term" value="C:nucleus"/>
    <property type="evidence" value="ECO:0000318"/>
    <property type="project" value="GO_Central"/>
</dbReference>
<dbReference type="GO" id="GO:0003677">
    <property type="term" value="F:DNA binding"/>
    <property type="evidence" value="ECO:0007669"/>
    <property type="project" value="UniProtKB-KW"/>
</dbReference>
<dbReference type="GO" id="GO:0008270">
    <property type="term" value="F:zinc ion binding"/>
    <property type="evidence" value="ECO:0007669"/>
    <property type="project" value="UniProtKB-KW"/>
</dbReference>
<dbReference type="GO" id="GO:0006357">
    <property type="term" value="P:regulation of transcription by RNA polymerase II"/>
    <property type="evidence" value="ECO:0000318"/>
    <property type="project" value="GO_Central"/>
</dbReference>
<dbReference type="CDD" id="cd07765">
    <property type="entry name" value="KRAB_A-box"/>
    <property type="match status" value="1"/>
</dbReference>
<dbReference type="FunFam" id="3.30.160.60:FF:002063">
    <property type="entry name" value="RB associated KRAB zinc finger"/>
    <property type="match status" value="2"/>
</dbReference>
<dbReference type="FunFam" id="3.30.160.60:FF:000358">
    <property type="entry name" value="zinc finger protein 24"/>
    <property type="match status" value="2"/>
</dbReference>
<dbReference type="FunFam" id="3.30.160.60:FF:002343">
    <property type="entry name" value="Zinc finger protein 33A"/>
    <property type="match status" value="1"/>
</dbReference>
<dbReference type="FunFam" id="3.30.160.60:FF:002107">
    <property type="entry name" value="Zinc finger protein 484"/>
    <property type="match status" value="1"/>
</dbReference>
<dbReference type="FunFam" id="3.30.160.60:FF:000268">
    <property type="entry name" value="zinc finger protein 484 isoform X2"/>
    <property type="match status" value="4"/>
</dbReference>
<dbReference type="FunFam" id="3.30.160.60:FF:002254">
    <property type="entry name" value="Zinc finger protein 540"/>
    <property type="match status" value="1"/>
</dbReference>
<dbReference type="FunFam" id="3.30.160.60:FF:001270">
    <property type="entry name" value="zinc finger protein 583 isoform X1"/>
    <property type="match status" value="1"/>
</dbReference>
<dbReference type="FunFam" id="3.30.160.60:FF:001396">
    <property type="entry name" value="Zinc finger protein 585A"/>
    <property type="match status" value="3"/>
</dbReference>
<dbReference type="FunFam" id="3.30.160.60:FF:002074">
    <property type="entry name" value="Zinc finger protein 841"/>
    <property type="match status" value="1"/>
</dbReference>
<dbReference type="FunFam" id="3.30.160.60:FF:002440">
    <property type="entry name" value="ZNF484 isoform 2"/>
    <property type="match status" value="1"/>
</dbReference>
<dbReference type="Gene3D" id="6.10.140.140">
    <property type="match status" value="1"/>
</dbReference>
<dbReference type="Gene3D" id="3.30.160.60">
    <property type="entry name" value="Classic Zinc Finger"/>
    <property type="match status" value="18"/>
</dbReference>
<dbReference type="InterPro" id="IPR001909">
    <property type="entry name" value="KRAB"/>
</dbReference>
<dbReference type="InterPro" id="IPR036051">
    <property type="entry name" value="KRAB_dom_sf"/>
</dbReference>
<dbReference type="InterPro" id="IPR036236">
    <property type="entry name" value="Znf_C2H2_sf"/>
</dbReference>
<dbReference type="InterPro" id="IPR013087">
    <property type="entry name" value="Znf_C2H2_type"/>
</dbReference>
<dbReference type="PANTHER" id="PTHR23235:SF178">
    <property type="entry name" value="C2H2-TYPE DOMAIN-CONTAINING PROTEIN-RELATED"/>
    <property type="match status" value="1"/>
</dbReference>
<dbReference type="PANTHER" id="PTHR23235">
    <property type="entry name" value="KRUEPPEL-LIKE TRANSCRIPTION FACTOR"/>
    <property type="match status" value="1"/>
</dbReference>
<dbReference type="Pfam" id="PF01352">
    <property type="entry name" value="KRAB"/>
    <property type="match status" value="1"/>
</dbReference>
<dbReference type="Pfam" id="PF00096">
    <property type="entry name" value="zf-C2H2"/>
    <property type="match status" value="14"/>
</dbReference>
<dbReference type="SMART" id="SM00349">
    <property type="entry name" value="KRAB"/>
    <property type="match status" value="1"/>
</dbReference>
<dbReference type="SMART" id="SM00355">
    <property type="entry name" value="ZnF_C2H2"/>
    <property type="match status" value="17"/>
</dbReference>
<dbReference type="SUPFAM" id="SSF57667">
    <property type="entry name" value="beta-beta-alpha zinc fingers"/>
    <property type="match status" value="11"/>
</dbReference>
<dbReference type="SUPFAM" id="SSF109640">
    <property type="entry name" value="KRAB domain (Kruppel-associated box)"/>
    <property type="match status" value="1"/>
</dbReference>
<dbReference type="PROSITE" id="PS50805">
    <property type="entry name" value="KRAB"/>
    <property type="match status" value="1"/>
</dbReference>
<dbReference type="PROSITE" id="PS00028">
    <property type="entry name" value="ZINC_FINGER_C2H2_1"/>
    <property type="match status" value="15"/>
</dbReference>
<dbReference type="PROSITE" id="PS50157">
    <property type="entry name" value="ZINC_FINGER_C2H2_2"/>
    <property type="match status" value="18"/>
</dbReference>
<sequence length="852" mass="98221">MTKSLESVSFKDVTVDFSRDEWQQLDLAQKSLYREVMLENYFNLISVGCQVPKPEVIFSLEQEEPCMLDGEIPSQSRPDGDIGFGPLQQRMSEEVSFQSEININLFTRDDPYSILEELWKDDEHTRKCGENQNKPLSRVVFINKKTLANDSIFEYKDIGEIVHVNTHLVSSRKRPHNCNSCGKNLEPIITLYNRNNATENSDKTIGDGDIFTHLNSHTEVTACECNQCGKPLHHKQALIQQQKIHTRESLYLFSDYVNVFSPKSHAFAHESICAEEKQHECHECEAVFTQKSQLDGSQRVYAGICTEYEKDFSLKSNRQKTPYEGNYYKCSDYGRAFIQKSDLFRCQRIHSGEKPYEYSECEKNLPQNSNLNIHKKIHTGGKHFECTECGKAFTRKSTLSMHQKIHTGEKPYVCTECGKAFIRKSHFITHERIHTGEKPYECSDCGKSFIKKSQLHVHQRIHTGENPFICSECGKVFTHKTNLIIHQKIHTGERPYICTVCGKAFTDRSNLIKHQKIHTGEKPYKCSDCGKSFTWKSRLRIHQKCHTGERHYECSECGKAFIQKSTLSMHQRIHRGEKPYVCTECGKAFFHKSHFITHERIHTGEKPYECSICGKSFTKKSQLHVHQQIHTGEKPYRCAECGKAFTDRSNLFTHQKIHTGEKPYKCSDCGKAFTRKSGLHIHQQSHTGERHYECSECGKAFARKSTLIMHQRIHTGEKPYICNECGKSFIQKSHLNRHRRIHTGEKPYECSDCGKSFIKKSQLHEHHRIHTGEKPYICAECGKAFTIRSNLIKHQKIHTKQKPYKCSDLGKALNWKPQLSMPQKSDNGEVECSMPQLWCGDSEGDQGQLSSI</sequence>